<comment type="catalytic activity">
    <reaction evidence="1">
        <text>tRNA(Gly) + glycine + ATP = glycyl-tRNA(Gly) + AMP + diphosphate</text>
        <dbReference type="Rhea" id="RHEA:16013"/>
        <dbReference type="Rhea" id="RHEA-COMP:9664"/>
        <dbReference type="Rhea" id="RHEA-COMP:9683"/>
        <dbReference type="ChEBI" id="CHEBI:30616"/>
        <dbReference type="ChEBI" id="CHEBI:33019"/>
        <dbReference type="ChEBI" id="CHEBI:57305"/>
        <dbReference type="ChEBI" id="CHEBI:78442"/>
        <dbReference type="ChEBI" id="CHEBI:78522"/>
        <dbReference type="ChEBI" id="CHEBI:456215"/>
        <dbReference type="EC" id="6.1.1.14"/>
    </reaction>
</comment>
<comment type="subunit">
    <text evidence="1">Tetramer of two alpha and two beta subunits.</text>
</comment>
<comment type="subcellular location">
    <subcellularLocation>
        <location evidence="1">Cytoplasm</location>
    </subcellularLocation>
</comment>
<comment type="similarity">
    <text evidence="1">Belongs to the class-II aminoacyl-tRNA synthetase family.</text>
</comment>
<proteinExistence type="inferred from homology"/>
<sequence length="689" mass="80665">MGKNFLLEIGTEEMPAHFIDPAIRQMYDFSLEYFKNKKISLESVKIWATPRRLVVYIENLGEKQEAQEEEIRGPAAHIGYKDGMWTEVAKRFVEQYGASLEDLHIEETPKGKYIFLRKVKEGMNTLEILPDYITSLLKSIRFPKMMKWGDVDFYFGRPIRWIVALYGDTEIEVEIAGVKSSRYSRPPRFLPQIPIEIRDADSYLNVMRENYIIVDQEERKNEILKQINKIANENSFILDYEDDLLKEVNYLVEYPTALLGEFDKKYLALPEVVLIITMEKKQRYFPLRDADGNLTNKFIVIRNGTDNYKDIVIQGNEKVLKARLSDAEYYYHEDTKHPLEKYTEKLSGIIFQEQLGTIKDKVERVRILVREIANILGLSSEENKILERSVNLYKADLGTLMVSEYPELHGIMGRIYAKISGEKDPIPEVIGEYIYPRTLDDRLPSNFLASILGIADRIDSLTGYFALDLFPTGSEDPIGLRRISGGLLRLLLESSLKLNLRNLFVKSFEIYNFGEKYPLSQIDKGMGFIGQRLRNLLLDRYSIDIVDAVMEVGYDEMWRLKRRLDFISKFKEKESYEKLKKALNRLYRILPKDFTPKEVSENLLSSPFEKKLYEDYLKIKNEIFNDILEGNYEVLLSYDFLNEFSDDIEKFFDNVLVMSPNEDERINRLSLLSLIKLLFWEILDWSRLS</sequence>
<reference key="1">
    <citation type="journal article" date="2014" name="Genome Announc.">
        <title>Complete Genome Sequence of the Extreme Thermophile Dictyoglomus thermophilum H-6-12.</title>
        <authorList>
            <person name="Coil D.A."/>
            <person name="Badger J.H."/>
            <person name="Forberger H.C."/>
            <person name="Riggs F."/>
            <person name="Madupu R."/>
            <person name="Fedorova N."/>
            <person name="Ward N."/>
            <person name="Robb F.T."/>
            <person name="Eisen J.A."/>
        </authorList>
    </citation>
    <scope>NUCLEOTIDE SEQUENCE [LARGE SCALE GENOMIC DNA]</scope>
    <source>
        <strain>ATCC 35947 / DSM 3960 / H-6-12</strain>
    </source>
</reference>
<protein>
    <recommendedName>
        <fullName evidence="1">Glycine--tRNA ligase beta subunit</fullName>
        <ecNumber evidence="1">6.1.1.14</ecNumber>
    </recommendedName>
    <alternativeName>
        <fullName evidence="1">Glycyl-tRNA synthetase beta subunit</fullName>
        <shortName evidence="1">GlyRS</shortName>
    </alternativeName>
</protein>
<keyword id="KW-0030">Aminoacyl-tRNA synthetase</keyword>
<keyword id="KW-0067">ATP-binding</keyword>
<keyword id="KW-0963">Cytoplasm</keyword>
<keyword id="KW-0436">Ligase</keyword>
<keyword id="KW-0547">Nucleotide-binding</keyword>
<keyword id="KW-0648">Protein biosynthesis</keyword>
<organism>
    <name type="scientific">Dictyoglomus thermophilum (strain ATCC 35947 / DSM 3960 / H-6-12)</name>
    <dbReference type="NCBI Taxonomy" id="309799"/>
    <lineage>
        <taxon>Bacteria</taxon>
        <taxon>Pseudomonadati</taxon>
        <taxon>Dictyoglomota</taxon>
        <taxon>Dictyoglomia</taxon>
        <taxon>Dictyoglomales</taxon>
        <taxon>Dictyoglomaceae</taxon>
        <taxon>Dictyoglomus</taxon>
    </lineage>
</organism>
<accession>B5YES4</accession>
<gene>
    <name evidence="1" type="primary">glyS</name>
    <name type="ordered locus">DICTH_1203</name>
</gene>
<feature type="chain" id="PRO_1000101275" description="Glycine--tRNA ligase beta subunit">
    <location>
        <begin position="1"/>
        <end position="689"/>
    </location>
</feature>
<name>SYGB_DICT6</name>
<dbReference type="EC" id="6.1.1.14" evidence="1"/>
<dbReference type="EMBL" id="CP001146">
    <property type="protein sequence ID" value="ACI19384.1"/>
    <property type="molecule type" value="Genomic_DNA"/>
</dbReference>
<dbReference type="RefSeq" id="WP_012548016.1">
    <property type="nucleotide sequence ID" value="NC_011297.1"/>
</dbReference>
<dbReference type="SMR" id="B5YES4"/>
<dbReference type="STRING" id="309799.DICTH_1203"/>
<dbReference type="PaxDb" id="309799-DICTH_1203"/>
<dbReference type="KEGG" id="dth:DICTH_1203"/>
<dbReference type="eggNOG" id="COG0751">
    <property type="taxonomic scope" value="Bacteria"/>
</dbReference>
<dbReference type="HOGENOM" id="CLU_007220_2_2_0"/>
<dbReference type="OrthoDB" id="9775440at2"/>
<dbReference type="Proteomes" id="UP000001733">
    <property type="component" value="Chromosome"/>
</dbReference>
<dbReference type="GO" id="GO:0005829">
    <property type="term" value="C:cytosol"/>
    <property type="evidence" value="ECO:0007669"/>
    <property type="project" value="TreeGrafter"/>
</dbReference>
<dbReference type="GO" id="GO:0004814">
    <property type="term" value="F:arginine-tRNA ligase activity"/>
    <property type="evidence" value="ECO:0007669"/>
    <property type="project" value="InterPro"/>
</dbReference>
<dbReference type="GO" id="GO:0005524">
    <property type="term" value="F:ATP binding"/>
    <property type="evidence" value="ECO:0007669"/>
    <property type="project" value="UniProtKB-UniRule"/>
</dbReference>
<dbReference type="GO" id="GO:0004820">
    <property type="term" value="F:glycine-tRNA ligase activity"/>
    <property type="evidence" value="ECO:0007669"/>
    <property type="project" value="UniProtKB-UniRule"/>
</dbReference>
<dbReference type="GO" id="GO:0006420">
    <property type="term" value="P:arginyl-tRNA aminoacylation"/>
    <property type="evidence" value="ECO:0007669"/>
    <property type="project" value="InterPro"/>
</dbReference>
<dbReference type="GO" id="GO:0006426">
    <property type="term" value="P:glycyl-tRNA aminoacylation"/>
    <property type="evidence" value="ECO:0007669"/>
    <property type="project" value="UniProtKB-UniRule"/>
</dbReference>
<dbReference type="HAMAP" id="MF_00255">
    <property type="entry name" value="Gly_tRNA_synth_beta"/>
    <property type="match status" value="1"/>
</dbReference>
<dbReference type="InterPro" id="IPR008909">
    <property type="entry name" value="DALR_anticod-bd"/>
</dbReference>
<dbReference type="InterPro" id="IPR015944">
    <property type="entry name" value="Gly-tRNA-synth_bsu"/>
</dbReference>
<dbReference type="InterPro" id="IPR006194">
    <property type="entry name" value="Gly-tRNA-synth_heterodimer"/>
</dbReference>
<dbReference type="NCBIfam" id="TIGR00211">
    <property type="entry name" value="glyS"/>
    <property type="match status" value="1"/>
</dbReference>
<dbReference type="PANTHER" id="PTHR30075:SF2">
    <property type="entry name" value="GLYCINE--TRNA LIGASE, CHLOROPLASTIC_MITOCHONDRIAL 2"/>
    <property type="match status" value="1"/>
</dbReference>
<dbReference type="PANTHER" id="PTHR30075">
    <property type="entry name" value="GLYCYL-TRNA SYNTHETASE"/>
    <property type="match status" value="1"/>
</dbReference>
<dbReference type="Pfam" id="PF05746">
    <property type="entry name" value="DALR_1"/>
    <property type="match status" value="1"/>
</dbReference>
<dbReference type="Pfam" id="PF02092">
    <property type="entry name" value="tRNA_synt_2f"/>
    <property type="match status" value="1"/>
</dbReference>
<dbReference type="PRINTS" id="PR01045">
    <property type="entry name" value="TRNASYNTHGB"/>
</dbReference>
<dbReference type="SUPFAM" id="SSF109604">
    <property type="entry name" value="HD-domain/PDEase-like"/>
    <property type="match status" value="1"/>
</dbReference>
<dbReference type="PROSITE" id="PS50861">
    <property type="entry name" value="AA_TRNA_LIGASE_II_GLYAB"/>
    <property type="match status" value="1"/>
</dbReference>
<evidence type="ECO:0000255" key="1">
    <source>
        <dbReference type="HAMAP-Rule" id="MF_00255"/>
    </source>
</evidence>